<sequence>MPITVNKLRHDTHHFFYKKIGAIFFISIFATFMNILIDMFIKPDMHIVSIMENNKFINASSLLEFIQNMNLNEKHELLKYSILKIMESLISKTTLLGSIIILISFVSEPKKKSIVSSIRTFFLFFPSLFILNFLTTFIIQIGFMLLIIPGILLSIILSLSPIILFFKKNRLLDSIRLSMYISWKYIKIIGPGVLFWMCGKFILTMLLAHFSLINKNVLFLISNISMNILFSILIIYLFRFYMIFLRS</sequence>
<reference key="1">
    <citation type="journal article" date="2009" name="Science">
        <title>The dynamics and time scale of ongoing genomic erosion in symbiotic bacteria.</title>
        <authorList>
            <person name="Moran N.A."/>
            <person name="McLaughlin H.J."/>
            <person name="Sorek R."/>
        </authorList>
    </citation>
    <scope>NUCLEOTIDE SEQUENCE [LARGE SCALE GENOMIC DNA]</scope>
    <source>
        <strain>Tuc7</strain>
    </source>
</reference>
<comment type="subcellular location">
    <subcellularLocation>
        <location evidence="1">Cell membrane</location>
        <topology evidence="1">Multi-pass membrane protein</topology>
    </subcellularLocation>
</comment>
<comment type="similarity">
    <text evidence="1">Belongs to the UPF0259 family.</text>
</comment>
<feature type="chain" id="PRO_1000149740" description="UPF0259 membrane protein BUAPTUC7_273">
    <location>
        <begin position="1"/>
        <end position="247"/>
    </location>
</feature>
<feature type="transmembrane region" description="Helical" evidence="1">
    <location>
        <begin position="20"/>
        <end position="40"/>
    </location>
</feature>
<feature type="transmembrane region" description="Helical" evidence="1">
    <location>
        <begin position="85"/>
        <end position="105"/>
    </location>
</feature>
<feature type="transmembrane region" description="Helical" evidence="1">
    <location>
        <begin position="114"/>
        <end position="134"/>
    </location>
</feature>
<feature type="transmembrane region" description="Helical" evidence="1">
    <location>
        <begin position="137"/>
        <end position="157"/>
    </location>
</feature>
<feature type="transmembrane region" description="Helical" evidence="1">
    <location>
        <begin position="188"/>
        <end position="208"/>
    </location>
</feature>
<feature type="transmembrane region" description="Helical" evidence="1">
    <location>
        <begin position="218"/>
        <end position="238"/>
    </location>
</feature>
<evidence type="ECO:0000255" key="1">
    <source>
        <dbReference type="HAMAP-Rule" id="MF_01067"/>
    </source>
</evidence>
<gene>
    <name type="ordered locus">BUAPTUC7_273</name>
</gene>
<accession>B8D7H3</accession>
<keyword id="KW-1003">Cell membrane</keyword>
<keyword id="KW-0472">Membrane</keyword>
<keyword id="KW-0812">Transmembrane</keyword>
<keyword id="KW-1133">Transmembrane helix</keyword>
<proteinExistence type="inferred from homology"/>
<protein>
    <recommendedName>
        <fullName evidence="1">UPF0259 membrane protein BUAPTUC7_273</fullName>
    </recommendedName>
</protein>
<name>Y273_BUCAT</name>
<organism>
    <name type="scientific">Buchnera aphidicola subsp. Acyrthosiphon pisum (strain Tuc7)</name>
    <dbReference type="NCBI Taxonomy" id="561501"/>
    <lineage>
        <taxon>Bacteria</taxon>
        <taxon>Pseudomonadati</taxon>
        <taxon>Pseudomonadota</taxon>
        <taxon>Gammaproteobacteria</taxon>
        <taxon>Enterobacterales</taxon>
        <taxon>Erwiniaceae</taxon>
        <taxon>Buchnera</taxon>
    </lineage>
</organism>
<dbReference type="EMBL" id="CP001158">
    <property type="protein sequence ID" value="ACL30088.1"/>
    <property type="molecule type" value="Genomic_DNA"/>
</dbReference>
<dbReference type="RefSeq" id="WP_012619488.1">
    <property type="nucleotide sequence ID" value="NC_011834.1"/>
</dbReference>
<dbReference type="KEGG" id="bau:BUAPTUC7_273"/>
<dbReference type="HOGENOM" id="CLU_073287_0_0_6"/>
<dbReference type="GO" id="GO:0005886">
    <property type="term" value="C:plasma membrane"/>
    <property type="evidence" value="ECO:0007669"/>
    <property type="project" value="UniProtKB-SubCell"/>
</dbReference>
<dbReference type="HAMAP" id="MF_01067">
    <property type="entry name" value="UPF0259"/>
    <property type="match status" value="1"/>
</dbReference>
<dbReference type="InterPro" id="IPR009627">
    <property type="entry name" value="UPF0259"/>
</dbReference>
<dbReference type="NCBIfam" id="NF002774">
    <property type="entry name" value="PRK02868.1"/>
    <property type="match status" value="1"/>
</dbReference>
<dbReference type="Pfam" id="PF06790">
    <property type="entry name" value="UPF0259"/>
    <property type="match status" value="1"/>
</dbReference>